<protein>
    <recommendedName>
        <fullName>Sprouty-related, EVH1 domain-containing protein 3</fullName>
        <shortName>Spred-3</shortName>
    </recommendedName>
</protein>
<gene>
    <name type="primary">SPRED3</name>
    <name type="synonym">EVE-3</name>
</gene>
<proteinExistence type="evidence at protein level"/>
<keyword id="KW-0025">Alternative splicing</keyword>
<keyword id="KW-1003">Cell membrane</keyword>
<keyword id="KW-0449">Lipoprotein</keyword>
<keyword id="KW-0472">Membrane</keyword>
<keyword id="KW-0488">Methylation</keyword>
<keyword id="KW-0564">Palmitate</keyword>
<keyword id="KW-0597">Phosphoprotein</keyword>
<keyword id="KW-1267">Proteomics identification</keyword>
<keyword id="KW-1185">Reference proteome</keyword>
<keyword id="KW-0832">Ubl conjugation</keyword>
<reference key="1">
    <citation type="journal article" date="2006" name="J. Hepatol.">
        <title>Eve-3: a liver enriched suppressor of Ras/MAPK signaling.</title>
        <authorList>
            <person name="King J.A.J."/>
            <person name="Corcoran N.M."/>
            <person name="D'Abaco G.M."/>
            <person name="Straffon A.F."/>
            <person name="Smith C.T."/>
            <person name="Poon C.L.C."/>
            <person name="Buchert M."/>
            <person name="I S.T.T."/>
            <person name="Hall N.E."/>
            <person name="Lock P."/>
            <person name="Hovens C.M."/>
        </authorList>
    </citation>
    <scope>NUCLEOTIDE SEQUENCE [MRNA] (ISOFORMS 1 AND 2)</scope>
    <scope>ALTERNATIVE SPLICING</scope>
    <source>
        <tissue>Liver</tissue>
    </source>
</reference>
<reference key="2">
    <citation type="journal article" date="2004" name="Nature">
        <title>The DNA sequence and biology of human chromosome 19.</title>
        <authorList>
            <person name="Grimwood J."/>
            <person name="Gordon L.A."/>
            <person name="Olsen A.S."/>
            <person name="Terry A."/>
            <person name="Schmutz J."/>
            <person name="Lamerdin J.E."/>
            <person name="Hellsten U."/>
            <person name="Goodstein D."/>
            <person name="Couronne O."/>
            <person name="Tran-Gyamfi M."/>
            <person name="Aerts A."/>
            <person name="Altherr M."/>
            <person name="Ashworth L."/>
            <person name="Bajorek E."/>
            <person name="Black S."/>
            <person name="Branscomb E."/>
            <person name="Caenepeel S."/>
            <person name="Carrano A.V."/>
            <person name="Caoile C."/>
            <person name="Chan Y.M."/>
            <person name="Christensen M."/>
            <person name="Cleland C.A."/>
            <person name="Copeland A."/>
            <person name="Dalin E."/>
            <person name="Dehal P."/>
            <person name="Denys M."/>
            <person name="Detter J.C."/>
            <person name="Escobar J."/>
            <person name="Flowers D."/>
            <person name="Fotopulos D."/>
            <person name="Garcia C."/>
            <person name="Georgescu A.M."/>
            <person name="Glavina T."/>
            <person name="Gomez M."/>
            <person name="Gonzales E."/>
            <person name="Groza M."/>
            <person name="Hammon N."/>
            <person name="Hawkins T."/>
            <person name="Haydu L."/>
            <person name="Ho I."/>
            <person name="Huang W."/>
            <person name="Israni S."/>
            <person name="Jett J."/>
            <person name="Kadner K."/>
            <person name="Kimball H."/>
            <person name="Kobayashi A."/>
            <person name="Larionov V."/>
            <person name="Leem S.-H."/>
            <person name="Lopez F."/>
            <person name="Lou Y."/>
            <person name="Lowry S."/>
            <person name="Malfatti S."/>
            <person name="Martinez D."/>
            <person name="McCready P.M."/>
            <person name="Medina C."/>
            <person name="Morgan J."/>
            <person name="Nelson K."/>
            <person name="Nolan M."/>
            <person name="Ovcharenko I."/>
            <person name="Pitluck S."/>
            <person name="Pollard M."/>
            <person name="Popkie A.P."/>
            <person name="Predki P."/>
            <person name="Quan G."/>
            <person name="Ramirez L."/>
            <person name="Rash S."/>
            <person name="Retterer J."/>
            <person name="Rodriguez A."/>
            <person name="Rogers S."/>
            <person name="Salamov A."/>
            <person name="Salazar A."/>
            <person name="She X."/>
            <person name="Smith D."/>
            <person name="Slezak T."/>
            <person name="Solovyev V."/>
            <person name="Thayer N."/>
            <person name="Tice H."/>
            <person name="Tsai M."/>
            <person name="Ustaszewska A."/>
            <person name="Vo N."/>
            <person name="Wagner M."/>
            <person name="Wheeler J."/>
            <person name="Wu K."/>
            <person name="Xie G."/>
            <person name="Yang J."/>
            <person name="Dubchak I."/>
            <person name="Furey T.S."/>
            <person name="DeJong P."/>
            <person name="Dickson M."/>
            <person name="Gordon D."/>
            <person name="Eichler E.E."/>
            <person name="Pennacchio L.A."/>
            <person name="Richardson P."/>
            <person name="Stubbs L."/>
            <person name="Rokhsar D.S."/>
            <person name="Myers R.M."/>
            <person name="Rubin E.M."/>
            <person name="Lucas S.M."/>
        </authorList>
    </citation>
    <scope>NUCLEOTIDE SEQUENCE [LARGE SCALE GENOMIC DNA]</scope>
</reference>
<reference key="3">
    <citation type="journal article" date="2006" name="Biochem. Biophys. Res. Commun.">
        <title>Spred-2 steady-state levels are regulated by phosphorylation and Cbl-mediated ubiquitination.</title>
        <authorList>
            <person name="Lock P."/>
            <person name="I S.T.T."/>
            <person name="Straffon A.F."/>
            <person name="Schieb H."/>
            <person name="Hovens C.M."/>
            <person name="Stylli S.S."/>
        </authorList>
    </citation>
    <scope>PHOSPHORYLATION</scope>
    <scope>UBIQUITINATION</scope>
</reference>
<reference key="4">
    <citation type="journal article" date="2014" name="Hum. Mol. Genet.">
        <title>The palmitoyl acyltransferase HIP14 shares a high proportion of interactors with huntingtin: implications for a role in the pathogenesis of Huntington's disease.</title>
        <authorList>
            <person name="Butland S.L."/>
            <person name="Sanders S.S."/>
            <person name="Schmidt M.E."/>
            <person name="Riechers S.P."/>
            <person name="Lin D.T."/>
            <person name="Martin D.D."/>
            <person name="Vaid K."/>
            <person name="Graham R.K."/>
            <person name="Singaraja R.R."/>
            <person name="Wanker E.E."/>
            <person name="Conibear E."/>
            <person name="Hayden M.R."/>
        </authorList>
    </citation>
    <scope>INTERACTION WITH ZDHHC17</scope>
</reference>
<feature type="chain" id="PRO_0000247431" description="Sprouty-related, EVH1 domain-containing protein 3">
    <location>
        <begin position="1"/>
        <end position="410"/>
    </location>
</feature>
<feature type="domain" description="WH1" evidence="2">
    <location>
        <begin position="1"/>
        <end position="113"/>
    </location>
</feature>
<feature type="domain" description="KBD" evidence="4">
    <location>
        <begin position="195"/>
        <end position="244"/>
    </location>
</feature>
<feature type="domain" description="SPR" evidence="3">
    <location>
        <begin position="296"/>
        <end position="407"/>
    </location>
</feature>
<feature type="region of interest" description="Disordered" evidence="5">
    <location>
        <begin position="117"/>
        <end position="210"/>
    </location>
</feature>
<feature type="region of interest" description="Disordered" evidence="5">
    <location>
        <begin position="258"/>
        <end position="288"/>
    </location>
</feature>
<feature type="compositionally biased region" description="Low complexity" evidence="5">
    <location>
        <begin position="120"/>
        <end position="130"/>
    </location>
</feature>
<feature type="compositionally biased region" description="Low complexity" evidence="5">
    <location>
        <begin position="147"/>
        <end position="165"/>
    </location>
</feature>
<feature type="compositionally biased region" description="Pro residues" evidence="5">
    <location>
        <begin position="267"/>
        <end position="281"/>
    </location>
</feature>
<feature type="modified residue" description="Asymmetric dimethylarginine" evidence="1">
    <location>
        <position position="240"/>
    </location>
</feature>
<feature type="modified residue" description="Omega-N-methylarginine" evidence="1">
    <location>
        <position position="248"/>
    </location>
</feature>
<feature type="splice variant" id="VSP_042949" description="In isoform 2." evidence="8">
    <original>SHVDSDSSSSH</original>
    <variation>LSQYFRHMLCP</variation>
    <location>
        <begin position="142"/>
        <end position="152"/>
    </location>
</feature>
<feature type="splice variant" id="VSP_042950" description="In isoform 2." evidence="8">
    <location>
        <begin position="153"/>
        <end position="410"/>
    </location>
</feature>
<dbReference type="EMBL" id="DQ323927">
    <property type="protein sequence ID" value="ABC54711.1"/>
    <property type="molecule type" value="mRNA"/>
</dbReference>
<dbReference type="EMBL" id="DQ323928">
    <property type="protein sequence ID" value="ABC54712.1"/>
    <property type="molecule type" value="mRNA"/>
</dbReference>
<dbReference type="EMBL" id="AC005789">
    <property type="status" value="NOT_ANNOTATED_CDS"/>
    <property type="molecule type" value="Genomic_DNA"/>
</dbReference>
<dbReference type="CCDS" id="CCDS42560.1">
    <molecule id="Q2MJR0-1"/>
</dbReference>
<dbReference type="RefSeq" id="NP_001035987.1">
    <molecule id="Q2MJR0-1"/>
    <property type="nucleotide sequence ID" value="NM_001042522.3"/>
</dbReference>
<dbReference type="RefSeq" id="NP_001381265.1">
    <molecule id="Q2MJR0-1"/>
    <property type="nucleotide sequence ID" value="NM_001394336.1"/>
</dbReference>
<dbReference type="RefSeq" id="XP_006723282.1">
    <property type="nucleotide sequence ID" value="XM_006723219.3"/>
</dbReference>
<dbReference type="SMR" id="Q2MJR0"/>
<dbReference type="BioGRID" id="134352">
    <property type="interactions" value="1"/>
</dbReference>
<dbReference type="FunCoup" id="Q2MJR0">
    <property type="interactions" value="8"/>
</dbReference>
<dbReference type="STRING" id="9606.ENSP00000345405"/>
<dbReference type="GlyGen" id="Q2MJR0">
    <property type="glycosylation" value="1 site"/>
</dbReference>
<dbReference type="iPTMnet" id="Q2MJR0"/>
<dbReference type="PhosphoSitePlus" id="Q2MJR0"/>
<dbReference type="BioMuta" id="SPRED3"/>
<dbReference type="DMDM" id="110816429"/>
<dbReference type="jPOST" id="Q2MJR0"/>
<dbReference type="MassIVE" id="Q2MJR0"/>
<dbReference type="PaxDb" id="9606-ENSP00000345405"/>
<dbReference type="PeptideAtlas" id="Q2MJR0"/>
<dbReference type="ProteomicsDB" id="61394">
    <molecule id="Q2MJR0-1"/>
</dbReference>
<dbReference type="ProteomicsDB" id="61395">
    <molecule id="Q2MJR0-2"/>
</dbReference>
<dbReference type="Antibodypedia" id="30059">
    <property type="antibodies" value="76 antibodies from 20 providers"/>
</dbReference>
<dbReference type="DNASU" id="399473"/>
<dbReference type="Ensembl" id="ENST00000338502.8">
    <molecule id="Q2MJR0-1"/>
    <property type="protein sequence ID" value="ENSP00000345405.4"/>
    <property type="gene ID" value="ENSG00000188766.13"/>
</dbReference>
<dbReference type="Ensembl" id="ENST00000586301.6">
    <molecule id="Q2MJR0-1"/>
    <property type="protein sequence ID" value="ENSP00000466568.1"/>
    <property type="gene ID" value="ENSG00000188766.13"/>
</dbReference>
<dbReference type="Ensembl" id="ENST00000691638.1">
    <molecule id="Q2MJR0-1"/>
    <property type="protein sequence ID" value="ENSP00000510478.1"/>
    <property type="gene ID" value="ENSG00000188766.13"/>
</dbReference>
<dbReference type="GeneID" id="399473"/>
<dbReference type="KEGG" id="hsa:399473"/>
<dbReference type="MANE-Select" id="ENST00000691638.1">
    <property type="protein sequence ID" value="ENSP00000510478.1"/>
    <property type="RefSeq nucleotide sequence ID" value="NM_001394336.1"/>
    <property type="RefSeq protein sequence ID" value="NP_001381265.1"/>
</dbReference>
<dbReference type="UCSC" id="uc002oim.5">
    <molecule id="Q2MJR0-1"/>
    <property type="organism name" value="human"/>
</dbReference>
<dbReference type="AGR" id="HGNC:31041"/>
<dbReference type="CTD" id="399473"/>
<dbReference type="DisGeNET" id="399473"/>
<dbReference type="GeneCards" id="SPRED3"/>
<dbReference type="HGNC" id="HGNC:31041">
    <property type="gene designation" value="SPRED3"/>
</dbReference>
<dbReference type="HPA" id="ENSG00000188766">
    <property type="expression patterns" value="Tissue enhanced (brain, pituitary gland)"/>
</dbReference>
<dbReference type="MIM" id="609293">
    <property type="type" value="gene"/>
</dbReference>
<dbReference type="neXtProt" id="NX_Q2MJR0"/>
<dbReference type="OpenTargets" id="ENSG00000188766"/>
<dbReference type="PharmGKB" id="PA134871045"/>
<dbReference type="VEuPathDB" id="HostDB:ENSG00000188766"/>
<dbReference type="eggNOG" id="KOG4590">
    <property type="taxonomic scope" value="Eukaryota"/>
</dbReference>
<dbReference type="GeneTree" id="ENSGT00940000161445"/>
<dbReference type="HOGENOM" id="CLU_038867_1_1_1"/>
<dbReference type="InParanoid" id="Q2MJR0"/>
<dbReference type="OMA" id="QFCARWA"/>
<dbReference type="OrthoDB" id="9629585at2759"/>
<dbReference type="PAN-GO" id="Q2MJR0">
    <property type="GO annotations" value="2 GO annotations based on evolutionary models"/>
</dbReference>
<dbReference type="PhylomeDB" id="Q2MJR0"/>
<dbReference type="PathwayCommons" id="Q2MJR0"/>
<dbReference type="Reactome" id="R-HSA-5658442">
    <property type="pathway name" value="Regulation of RAS by GAPs"/>
</dbReference>
<dbReference type="Reactome" id="R-HSA-6802953">
    <property type="pathway name" value="RAS signaling downstream of NF1 loss-of-function variants"/>
</dbReference>
<dbReference type="BioGRID-ORCS" id="399473">
    <property type="hits" value="9 hits in 1142 CRISPR screens"/>
</dbReference>
<dbReference type="GeneWiki" id="SPRED3"/>
<dbReference type="GenomeRNAi" id="399473"/>
<dbReference type="Pharos" id="Q2MJR0">
    <property type="development level" value="Tbio"/>
</dbReference>
<dbReference type="PRO" id="PR:Q2MJR0"/>
<dbReference type="Proteomes" id="UP000005640">
    <property type="component" value="Chromosome 19"/>
</dbReference>
<dbReference type="RNAct" id="Q2MJR0">
    <property type="molecule type" value="protein"/>
</dbReference>
<dbReference type="Bgee" id="ENSG00000188766">
    <property type="expression patterns" value="Expressed in kidney epithelium and 170 other cell types or tissues"/>
</dbReference>
<dbReference type="ExpressionAtlas" id="Q2MJR0">
    <property type="expression patterns" value="baseline and differential"/>
</dbReference>
<dbReference type="GO" id="GO:0005886">
    <property type="term" value="C:plasma membrane"/>
    <property type="evidence" value="ECO:0000318"/>
    <property type="project" value="GO_Central"/>
</dbReference>
<dbReference type="GO" id="GO:0019901">
    <property type="term" value="F:protein kinase binding"/>
    <property type="evidence" value="ECO:0000318"/>
    <property type="project" value="GO_Central"/>
</dbReference>
<dbReference type="GO" id="GO:0010719">
    <property type="term" value="P:negative regulation of epithelial to mesenchymal transition"/>
    <property type="evidence" value="ECO:0000250"/>
    <property type="project" value="UniProtKB"/>
</dbReference>
<dbReference type="GO" id="GO:0070373">
    <property type="term" value="P:negative regulation of ERK1 and ERK2 cascade"/>
    <property type="evidence" value="ECO:0000250"/>
    <property type="project" value="UniProtKB"/>
</dbReference>
<dbReference type="GO" id="GO:1902747">
    <property type="term" value="P:negative regulation of lens fiber cell differentiation"/>
    <property type="evidence" value="ECO:0000250"/>
    <property type="project" value="UniProtKB"/>
</dbReference>
<dbReference type="GO" id="GO:0030512">
    <property type="term" value="P:negative regulation of transforming growth factor beta receptor signaling pathway"/>
    <property type="evidence" value="ECO:0000250"/>
    <property type="project" value="UniProtKB"/>
</dbReference>
<dbReference type="CDD" id="cd10574">
    <property type="entry name" value="EVH1_SPRED-like"/>
    <property type="match status" value="1"/>
</dbReference>
<dbReference type="FunFam" id="2.30.29.30:FF:000052">
    <property type="entry name" value="Sprouty-related, EVH1 domain containing 2"/>
    <property type="match status" value="1"/>
</dbReference>
<dbReference type="Gene3D" id="2.30.29.30">
    <property type="entry name" value="Pleckstrin-homology domain (PH domain)/Phosphotyrosine-binding domain (PTB)"/>
    <property type="match status" value="1"/>
</dbReference>
<dbReference type="InterPro" id="IPR023337">
    <property type="entry name" value="KBD"/>
</dbReference>
<dbReference type="InterPro" id="IPR011993">
    <property type="entry name" value="PH-like_dom_sf"/>
</dbReference>
<dbReference type="InterPro" id="IPR041937">
    <property type="entry name" value="SPRE_EVH1"/>
</dbReference>
<dbReference type="InterPro" id="IPR007875">
    <property type="entry name" value="Sprouty"/>
</dbReference>
<dbReference type="InterPro" id="IPR000697">
    <property type="entry name" value="WH1/EVH1_dom"/>
</dbReference>
<dbReference type="PANTHER" id="PTHR11202:SF19">
    <property type="entry name" value="SPROUTY-RELATED, EVH1 DOMAIN-CONTAINING PROTEIN 3"/>
    <property type="match status" value="1"/>
</dbReference>
<dbReference type="PANTHER" id="PTHR11202">
    <property type="entry name" value="SPROUTY-RELATED, EVH1 DOMAIN-CONTAINING PROTEIN FAMILY MEMBER"/>
    <property type="match status" value="1"/>
</dbReference>
<dbReference type="Pfam" id="PF05210">
    <property type="entry name" value="Sprouty"/>
    <property type="match status" value="1"/>
</dbReference>
<dbReference type="Pfam" id="PF00568">
    <property type="entry name" value="WH1"/>
    <property type="match status" value="1"/>
</dbReference>
<dbReference type="SMART" id="SM00461">
    <property type="entry name" value="WH1"/>
    <property type="match status" value="1"/>
</dbReference>
<dbReference type="SUPFAM" id="SSF50729">
    <property type="entry name" value="PH domain-like"/>
    <property type="match status" value="1"/>
</dbReference>
<dbReference type="PROSITE" id="PS51488">
    <property type="entry name" value="KBD"/>
    <property type="match status" value="1"/>
</dbReference>
<dbReference type="PROSITE" id="PS51227">
    <property type="entry name" value="SPR"/>
    <property type="match status" value="1"/>
</dbReference>
<dbReference type="PROSITE" id="PS50229">
    <property type="entry name" value="WH1"/>
    <property type="match status" value="1"/>
</dbReference>
<evidence type="ECO:0000250" key="1">
    <source>
        <dbReference type="UniProtKB" id="Q6P6N5"/>
    </source>
</evidence>
<evidence type="ECO:0000255" key="2">
    <source>
        <dbReference type="PROSITE-ProRule" id="PRU00410"/>
    </source>
</evidence>
<evidence type="ECO:0000255" key="3">
    <source>
        <dbReference type="PROSITE-ProRule" id="PRU00572"/>
    </source>
</evidence>
<evidence type="ECO:0000255" key="4">
    <source>
        <dbReference type="PROSITE-ProRule" id="PRU00821"/>
    </source>
</evidence>
<evidence type="ECO:0000256" key="5">
    <source>
        <dbReference type="SAM" id="MobiDB-lite"/>
    </source>
</evidence>
<evidence type="ECO:0000269" key="6">
    <source>
    </source>
</evidence>
<evidence type="ECO:0000269" key="7">
    <source>
    </source>
</evidence>
<evidence type="ECO:0000303" key="8">
    <source>
    </source>
</evidence>
<accession>Q2MJR0</accession>
<accession>Q2MJR1</accession>
<organism>
    <name type="scientific">Homo sapiens</name>
    <name type="common">Human</name>
    <dbReference type="NCBI Taxonomy" id="9606"/>
    <lineage>
        <taxon>Eukaryota</taxon>
        <taxon>Metazoa</taxon>
        <taxon>Chordata</taxon>
        <taxon>Craniata</taxon>
        <taxon>Vertebrata</taxon>
        <taxon>Euteleostomi</taxon>
        <taxon>Mammalia</taxon>
        <taxon>Eutheria</taxon>
        <taxon>Euarchontoglires</taxon>
        <taxon>Primates</taxon>
        <taxon>Haplorrhini</taxon>
        <taxon>Catarrhini</taxon>
        <taxon>Hominidae</taxon>
        <taxon>Homo</taxon>
    </lineage>
</organism>
<sequence>MVRVRAVVMARDDSSGGWLPVGGGGLSQVSVCRVRGARPEGGARQGHYVIHGERLRDQKTTLECTLKPGLVYNKVNPIFHHWSLGDCKFGLTFQSPAEADEFQKSLLAALAALGRGSLTPSSSSSSSSPSQDTAETPCPLTSHVDSDSSSSHSRQETPPSAAAAPIITMESASGFGPTTPPQRRRSSAQSYPPLLPFTGIPEPSEPLAGAGGLGWGGRGYEDYRRSGPPAPLALSTCVVRFAKTGALRGAALGPPAALPAPLTEAAPPAPPARPPPGPGPSSAPAKASPEAEEAARCVHCRALFRRRADGRGGRCAEAPDPGRLLVRRLSCLWCAESLLYHCLSDAEGDFSDPCACEPGHPRPAARWAALAALSLAVPCLCCYAPLRACHWVAARCGCAGCGGRHEEAAR</sequence>
<comment type="function">
    <text evidence="1">Tyrosine kinase substrate that inhibits growth-factor-mediated activation of MAP kinase (By similarity). Inhibits fibroblast growth factor (FGF)-induced retinal lens fiber differentiation, probably by inhibiting FGF-mediated phosphorylation of ERK1/2 (By similarity). Inhibits TGFB-induced epithelial-to-mesenchymal transition in lens epithelial cells (By similarity).</text>
</comment>
<comment type="subunit">
    <text evidence="7">Interacts with palmitoyltransferase ZDHHC17/HIP14; the interaction leads to palmitoylation of SPRED3.</text>
</comment>
<comment type="subcellular location">
    <subcellularLocation>
        <location evidence="1">Cell membrane</location>
        <topology evidence="1">Peripheral membrane protein</topology>
    </subcellularLocation>
</comment>
<comment type="alternative products">
    <event type="alternative splicing"/>
    <isoform>
        <id>Q2MJR0-1</id>
        <name>1</name>
        <sequence type="displayed"/>
    </isoform>
    <isoform>
        <id>Q2MJR0-2</id>
        <name>2</name>
        <name>EVE-3</name>
        <sequence type="described" ref="VSP_042949 VSP_042950"/>
    </isoform>
</comment>
<comment type="PTM">
    <text evidence="6">Phosphorylated on tyrosine.</text>
</comment>
<comment type="PTM">
    <text evidence="1">Palmitoylated by ZDHHC17/HIP14.</text>
</comment>
<comment type="PTM">
    <text evidence="6">Ubiquitinated.</text>
</comment>
<name>SPRE3_HUMAN</name>